<keyword id="KW-0997">Cell inner membrane</keyword>
<keyword id="KW-1003">Cell membrane</keyword>
<keyword id="KW-0449">Lipoprotein</keyword>
<keyword id="KW-0472">Membrane</keyword>
<keyword id="KW-0564">Palmitate</keyword>
<keyword id="KW-1185">Reference proteome</keyword>
<keyword id="KW-0732">Signal</keyword>
<reference key="1">
    <citation type="journal article" date="1994" name="Gene">
        <title>Cloning, analysis and expression of an rpoS homologue gene from Pseudomonas aeruginosa PAO1.</title>
        <authorList>
            <person name="Tanaka K."/>
            <person name="Takahashi H."/>
        </authorList>
    </citation>
    <scope>NUCLEOTIDE SEQUENCE [GENOMIC DNA]</scope>
    <source>
        <strain>ATCC 15692 / DSM 22644 / CIP 104116 / JCM 14847 / LMG 12228 / 1C / PRS 101 / PAO1</strain>
    </source>
</reference>
<reference key="2">
    <citation type="journal article" date="2000" name="Nature">
        <title>Complete genome sequence of Pseudomonas aeruginosa PAO1, an opportunistic pathogen.</title>
        <authorList>
            <person name="Stover C.K."/>
            <person name="Pham X.-Q.T."/>
            <person name="Erwin A.L."/>
            <person name="Mizoguchi S.D."/>
            <person name="Warrener P."/>
            <person name="Hickey M.J."/>
            <person name="Brinkman F.S.L."/>
            <person name="Hufnagle W.O."/>
            <person name="Kowalik D.J."/>
            <person name="Lagrou M."/>
            <person name="Garber R.L."/>
            <person name="Goltry L."/>
            <person name="Tolentino E."/>
            <person name="Westbrock-Wadman S."/>
            <person name="Yuan Y."/>
            <person name="Brody L.L."/>
            <person name="Coulter S.N."/>
            <person name="Folger K.R."/>
            <person name="Kas A."/>
            <person name="Larbig K."/>
            <person name="Lim R.M."/>
            <person name="Smith K.A."/>
            <person name="Spencer D.H."/>
            <person name="Wong G.K.-S."/>
            <person name="Wu Z."/>
            <person name="Paulsen I.T."/>
            <person name="Reizer J."/>
            <person name="Saier M.H. Jr."/>
            <person name="Hancock R.E.W."/>
            <person name="Lory S."/>
            <person name="Olson M.V."/>
        </authorList>
    </citation>
    <scope>NUCLEOTIDE SEQUENCE [LARGE SCALE GENOMIC DNA]</scope>
    <source>
        <strain>ATCC 15692 / DSM 22644 / CIP 104116 / JCM 14847 / LMG 12228 / 1C / PRS 101 / PAO1</strain>
    </source>
</reference>
<sequence>MDKGEGLRLAATLRQWTRLYGGCHLLLGAVVCSLLAACSSSPPGGVKVVDRNGSAPAAARRTPVTSGQYIVRRGDTLYSIAFRFGWDWKALAARNGIAPPYTIQVGQAIQFGGRASTQPSVAKNTPVVAAPVATKPTPVPPAVSTSVPAKPAPAPASTTTPPSSGATPVVAGPAVGGWAWPASGTLIGRFASNGSLNKGIDIAGQLGQPVLAASGGTVVYAGSGLRGYGELVIIKHNETYVSAYGHNRRLLVREGQQVKVGQSIAEMGSTGTDRVKLHFEIRRQGKPVDPLQYLPRR</sequence>
<feature type="signal peptide" evidence="3">
    <location>
        <begin position="1"/>
        <end position="22"/>
    </location>
</feature>
<feature type="chain" id="PRO_0000018033" description="Lipoprotein NlpD/LppB homolog">
    <location>
        <begin position="23"/>
        <end position="297"/>
    </location>
</feature>
<feature type="domain" description="LysM" evidence="1">
    <location>
        <begin position="67"/>
        <end position="111"/>
    </location>
</feature>
<feature type="region of interest" description="Disordered" evidence="2">
    <location>
        <begin position="134"/>
        <end position="168"/>
    </location>
</feature>
<feature type="lipid moiety-binding region" description="N-palmitoyl cysteine" evidence="3">
    <location>
        <position position="23"/>
    </location>
</feature>
<feature type="lipid moiety-binding region" description="S-diacylglycerol cysteine" evidence="3">
    <location>
        <position position="23"/>
    </location>
</feature>
<evidence type="ECO:0000255" key="1">
    <source>
        <dbReference type="PROSITE-ProRule" id="PRU01118"/>
    </source>
</evidence>
<evidence type="ECO:0000256" key="2">
    <source>
        <dbReference type="SAM" id="MobiDB-lite"/>
    </source>
</evidence>
<evidence type="ECO:0000305" key="3"/>
<dbReference type="EMBL" id="D26134">
    <property type="protein sequence ID" value="BAA05130.1"/>
    <property type="molecule type" value="Genomic_DNA"/>
</dbReference>
<dbReference type="EMBL" id="AE004091">
    <property type="protein sequence ID" value="AAG07011.1"/>
    <property type="molecule type" value="Genomic_DNA"/>
</dbReference>
<dbReference type="PIR" id="S55063">
    <property type="entry name" value="S55063"/>
</dbReference>
<dbReference type="RefSeq" id="NP_252313.1">
    <property type="nucleotide sequence ID" value="NC_002516.2"/>
</dbReference>
<dbReference type="RefSeq" id="WP_003115226.1">
    <property type="nucleotide sequence ID" value="NZ_QZGE01000001.1"/>
</dbReference>
<dbReference type="SMR" id="P45682"/>
<dbReference type="FunCoup" id="P45682">
    <property type="interactions" value="101"/>
</dbReference>
<dbReference type="STRING" id="208964.PA3623"/>
<dbReference type="PaxDb" id="208964-PA3623"/>
<dbReference type="GeneID" id="880422"/>
<dbReference type="KEGG" id="pae:PA3623"/>
<dbReference type="PATRIC" id="fig|208964.12.peg.3792"/>
<dbReference type="PseudoCAP" id="PA3623"/>
<dbReference type="HOGENOM" id="CLU_029425_0_2_6"/>
<dbReference type="InParanoid" id="P45682"/>
<dbReference type="OrthoDB" id="9795421at2"/>
<dbReference type="PhylomeDB" id="P45682"/>
<dbReference type="BioCyc" id="PAER208964:G1FZ6-3693-MONOMER"/>
<dbReference type="Proteomes" id="UP000002438">
    <property type="component" value="Chromosome"/>
</dbReference>
<dbReference type="GO" id="GO:0032153">
    <property type="term" value="C:cell division site"/>
    <property type="evidence" value="ECO:0000318"/>
    <property type="project" value="GO_Central"/>
</dbReference>
<dbReference type="GO" id="GO:0009279">
    <property type="term" value="C:cell outer membrane"/>
    <property type="evidence" value="ECO:0000318"/>
    <property type="project" value="GO_Central"/>
</dbReference>
<dbReference type="GO" id="GO:0005886">
    <property type="term" value="C:plasma membrane"/>
    <property type="evidence" value="ECO:0007669"/>
    <property type="project" value="UniProtKB-SubCell"/>
</dbReference>
<dbReference type="GO" id="GO:0004222">
    <property type="term" value="F:metalloendopeptidase activity"/>
    <property type="evidence" value="ECO:0000318"/>
    <property type="project" value="GO_Central"/>
</dbReference>
<dbReference type="CDD" id="cd00118">
    <property type="entry name" value="LysM"/>
    <property type="match status" value="1"/>
</dbReference>
<dbReference type="CDD" id="cd12797">
    <property type="entry name" value="M23_peptidase"/>
    <property type="match status" value="1"/>
</dbReference>
<dbReference type="FunFam" id="2.70.70.10:FF:000010">
    <property type="entry name" value="M23 family peptidase"/>
    <property type="match status" value="1"/>
</dbReference>
<dbReference type="FunFam" id="3.10.350.10:FF:000006">
    <property type="entry name" value="YgeR family lipoprotein"/>
    <property type="match status" value="1"/>
</dbReference>
<dbReference type="Gene3D" id="2.70.70.10">
    <property type="entry name" value="Glucose Permease (Domain IIA)"/>
    <property type="match status" value="1"/>
</dbReference>
<dbReference type="Gene3D" id="3.10.350.10">
    <property type="entry name" value="LysM domain"/>
    <property type="match status" value="1"/>
</dbReference>
<dbReference type="InterPro" id="IPR050570">
    <property type="entry name" value="Cell_wall_metabolism_enzyme"/>
</dbReference>
<dbReference type="InterPro" id="IPR011055">
    <property type="entry name" value="Dup_hybrid_motif"/>
</dbReference>
<dbReference type="InterPro" id="IPR018392">
    <property type="entry name" value="LysM_dom"/>
</dbReference>
<dbReference type="InterPro" id="IPR036779">
    <property type="entry name" value="LysM_dom_sf"/>
</dbReference>
<dbReference type="InterPro" id="IPR016047">
    <property type="entry name" value="Peptidase_M23"/>
</dbReference>
<dbReference type="PANTHER" id="PTHR21666:SF263">
    <property type="entry name" value="MUREIN HYDROLASE ACTIVATOR NLPD"/>
    <property type="match status" value="1"/>
</dbReference>
<dbReference type="PANTHER" id="PTHR21666">
    <property type="entry name" value="PEPTIDASE-RELATED"/>
    <property type="match status" value="1"/>
</dbReference>
<dbReference type="Pfam" id="PF01476">
    <property type="entry name" value="LysM"/>
    <property type="match status" value="1"/>
</dbReference>
<dbReference type="Pfam" id="PF01551">
    <property type="entry name" value="Peptidase_M23"/>
    <property type="match status" value="1"/>
</dbReference>
<dbReference type="SMART" id="SM00257">
    <property type="entry name" value="LysM"/>
    <property type="match status" value="1"/>
</dbReference>
<dbReference type="SUPFAM" id="SSF51261">
    <property type="entry name" value="Duplicated hybrid motif"/>
    <property type="match status" value="1"/>
</dbReference>
<dbReference type="PROSITE" id="PS51782">
    <property type="entry name" value="LYSM"/>
    <property type="match status" value="1"/>
</dbReference>
<organism>
    <name type="scientific">Pseudomonas aeruginosa (strain ATCC 15692 / DSM 22644 / CIP 104116 / JCM 14847 / LMG 12228 / 1C / PRS 101 / PAO1)</name>
    <dbReference type="NCBI Taxonomy" id="208964"/>
    <lineage>
        <taxon>Bacteria</taxon>
        <taxon>Pseudomonadati</taxon>
        <taxon>Pseudomonadota</taxon>
        <taxon>Gammaproteobacteria</taxon>
        <taxon>Pseudomonadales</taxon>
        <taxon>Pseudomonadaceae</taxon>
        <taxon>Pseudomonas</taxon>
    </lineage>
</organism>
<comment type="subcellular location">
    <subcellularLocation>
        <location evidence="3">Cell inner membrane</location>
        <topology evidence="3">Lipid-anchor</topology>
    </subcellularLocation>
</comment>
<comment type="similarity">
    <text evidence="3">Belongs to the E.coli NlpD/Haemophilus LppB family.</text>
</comment>
<protein>
    <recommendedName>
        <fullName>Lipoprotein NlpD/LppB homolog</fullName>
    </recommendedName>
</protein>
<gene>
    <name type="ordered locus">PA3623</name>
</gene>
<accession>P45682</accession>
<name>NLPD_PSEAE</name>
<proteinExistence type="inferred from homology"/>